<evidence type="ECO:0000255" key="1">
    <source>
        <dbReference type="PROSITE-ProRule" id="PRU00042"/>
    </source>
</evidence>
<evidence type="ECO:0000305" key="2"/>
<feature type="chain" id="PRO_0000047040" description="Escargot/snail protein homolog">
    <location>
        <begin position="1" status="less than"/>
        <end position="81" status="greater than"/>
    </location>
</feature>
<feature type="zinc finger region" description="C2H2-type 1" evidence="1">
    <location>
        <begin position="1" status="less than"/>
        <end position="5"/>
    </location>
</feature>
<feature type="zinc finger region" description="C2H2-type 2" evidence="1">
    <location>
        <begin position="17"/>
        <end position="39"/>
    </location>
</feature>
<feature type="zinc finger region" description="C2H2-type 3" evidence="1">
    <location>
        <begin position="43"/>
        <end position="65"/>
    </location>
</feature>
<feature type="zinc finger region" description="C2H2-type 4" evidence="1">
    <location>
        <begin position="71"/>
        <end position="81" status="greater than"/>
    </location>
</feature>
<feature type="non-terminal residue">
    <location>
        <position position="1"/>
    </location>
</feature>
<feature type="non-terminal residue">
    <location>
        <position position="81"/>
    </location>
</feature>
<organism>
    <name type="scientific">Apis mellifera</name>
    <name type="common">Honeybee</name>
    <dbReference type="NCBI Taxonomy" id="7460"/>
    <lineage>
        <taxon>Eukaryota</taxon>
        <taxon>Metazoa</taxon>
        <taxon>Ecdysozoa</taxon>
        <taxon>Arthropoda</taxon>
        <taxon>Hexapoda</taxon>
        <taxon>Insecta</taxon>
        <taxon>Pterygota</taxon>
        <taxon>Neoptera</taxon>
        <taxon>Endopterygota</taxon>
        <taxon>Hymenoptera</taxon>
        <taxon>Apocrita</taxon>
        <taxon>Aculeata</taxon>
        <taxon>Apoidea</taxon>
        <taxon>Anthophila</taxon>
        <taxon>Apidae</taxon>
        <taxon>Apis</taxon>
    </lineage>
</organism>
<name>ESCA_APIME</name>
<accession>P31508</accession>
<sequence length="81" mass="9201">HQQFHCAAAEGQAKKSFSCKYCEKVYVSLGALKMHIRTHTLPCKCHLCGKAFSRPWLLQGHIRTHTGEKPFSCQHCNRAFA</sequence>
<protein>
    <recommendedName>
        <fullName>Escargot/snail protein homolog</fullName>
    </recommendedName>
</protein>
<keyword id="KW-0238">DNA-binding</keyword>
<keyword id="KW-0479">Metal-binding</keyword>
<keyword id="KW-0539">Nucleus</keyword>
<keyword id="KW-1185">Reference proteome</keyword>
<keyword id="KW-0677">Repeat</keyword>
<keyword id="KW-0862">Zinc</keyword>
<keyword id="KW-0863">Zinc-finger</keyword>
<dbReference type="EMBL" id="L01589">
    <property type="protein sequence ID" value="AAA27736.1"/>
    <property type="molecule type" value="Genomic_DNA"/>
</dbReference>
<dbReference type="SMR" id="P31508"/>
<dbReference type="STRING" id="7460.P31508"/>
<dbReference type="PaxDb" id="7460-GB53867-PA"/>
<dbReference type="EnsemblMetazoa" id="XM_393944">
    <property type="protein sequence ID" value="XP_393944"/>
    <property type="gene ID" value="LOC410464"/>
</dbReference>
<dbReference type="eggNOG" id="KOG2462">
    <property type="taxonomic scope" value="Eukaryota"/>
</dbReference>
<dbReference type="InParanoid" id="P31508"/>
<dbReference type="Proteomes" id="UP000005203">
    <property type="component" value="Unplaced"/>
</dbReference>
<dbReference type="GO" id="GO:0005634">
    <property type="term" value="C:nucleus"/>
    <property type="evidence" value="ECO:0007669"/>
    <property type="project" value="UniProtKB-SubCell"/>
</dbReference>
<dbReference type="GO" id="GO:0000981">
    <property type="term" value="F:DNA-binding transcription factor activity, RNA polymerase II-specific"/>
    <property type="evidence" value="ECO:0007669"/>
    <property type="project" value="TreeGrafter"/>
</dbReference>
<dbReference type="GO" id="GO:0000978">
    <property type="term" value="F:RNA polymerase II cis-regulatory region sequence-specific DNA binding"/>
    <property type="evidence" value="ECO:0007669"/>
    <property type="project" value="TreeGrafter"/>
</dbReference>
<dbReference type="GO" id="GO:0008270">
    <property type="term" value="F:zinc ion binding"/>
    <property type="evidence" value="ECO:0007669"/>
    <property type="project" value="UniProtKB-KW"/>
</dbReference>
<dbReference type="FunFam" id="3.30.160.60:FF:000942">
    <property type="entry name" value="Snail zinc finger protein"/>
    <property type="match status" value="1"/>
</dbReference>
<dbReference type="FunFam" id="3.30.160.60:FF:000860">
    <property type="entry name" value="zinc finger protein SNAI2"/>
    <property type="match status" value="1"/>
</dbReference>
<dbReference type="Gene3D" id="3.30.160.60">
    <property type="entry name" value="Classic Zinc Finger"/>
    <property type="match status" value="3"/>
</dbReference>
<dbReference type="InterPro" id="IPR050527">
    <property type="entry name" value="Snail/Krueppel_Znf"/>
</dbReference>
<dbReference type="InterPro" id="IPR036236">
    <property type="entry name" value="Znf_C2H2_sf"/>
</dbReference>
<dbReference type="InterPro" id="IPR013087">
    <property type="entry name" value="Znf_C2H2_type"/>
</dbReference>
<dbReference type="PANTHER" id="PTHR24388:SF54">
    <property type="entry name" value="PROTEIN ESCARGOT"/>
    <property type="match status" value="1"/>
</dbReference>
<dbReference type="PANTHER" id="PTHR24388">
    <property type="entry name" value="ZINC FINGER PROTEIN"/>
    <property type="match status" value="1"/>
</dbReference>
<dbReference type="Pfam" id="PF00096">
    <property type="entry name" value="zf-C2H2"/>
    <property type="match status" value="2"/>
</dbReference>
<dbReference type="SMART" id="SM00355">
    <property type="entry name" value="ZnF_C2H2"/>
    <property type="match status" value="2"/>
</dbReference>
<dbReference type="SUPFAM" id="SSF57667">
    <property type="entry name" value="beta-beta-alpha zinc fingers"/>
    <property type="match status" value="2"/>
</dbReference>
<dbReference type="PROSITE" id="PS00028">
    <property type="entry name" value="ZINC_FINGER_C2H2_1"/>
    <property type="match status" value="2"/>
</dbReference>
<dbReference type="PROSITE" id="PS50157">
    <property type="entry name" value="ZINC_FINGER_C2H2_2"/>
    <property type="match status" value="2"/>
</dbReference>
<proteinExistence type="inferred from homology"/>
<comment type="subcellular location">
    <subcellularLocation>
        <location evidence="2">Nucleus</location>
    </subcellularLocation>
</comment>
<comment type="similarity">
    <text evidence="2">Belongs to the snail C2H2-type zinc-finger protein family.</text>
</comment>
<reference key="1">
    <citation type="journal article" date="1992" name="Proc. Natl. Acad. Sci. U.S.A.">
        <title>Evolutionary conservation pattern of zinc-finger domains of Drosophila segmentation genes.</title>
        <authorList>
            <person name="Sommer R.J."/>
            <person name="Retzlaff M."/>
            <person name="Goerlich K."/>
            <person name="Sander K."/>
            <person name="Tautz D."/>
        </authorList>
    </citation>
    <scope>NUCLEOTIDE SEQUENCE [GENOMIC DNA]</scope>
</reference>